<gene>
    <name evidence="1" type="primary">dtd</name>
    <name type="ordered locus">CKO_03125</name>
</gene>
<protein>
    <recommendedName>
        <fullName evidence="1">D-aminoacyl-tRNA deacylase</fullName>
        <shortName evidence="1">DTD</shortName>
        <ecNumber evidence="1">3.1.1.96</ecNumber>
    </recommendedName>
    <alternativeName>
        <fullName evidence="1">Gly-tRNA(Ala) deacylase</fullName>
    </alternativeName>
</protein>
<keyword id="KW-0963">Cytoplasm</keyword>
<keyword id="KW-0378">Hydrolase</keyword>
<keyword id="KW-1185">Reference proteome</keyword>
<keyword id="KW-0694">RNA-binding</keyword>
<keyword id="KW-0820">tRNA-binding</keyword>
<feature type="chain" id="PRO_1000050823" description="D-aminoacyl-tRNA deacylase">
    <location>
        <begin position="1"/>
        <end position="145"/>
    </location>
</feature>
<feature type="short sequence motif" description="Gly-cisPro motif, important for rejection of L-amino acids" evidence="1">
    <location>
        <begin position="137"/>
        <end position="138"/>
    </location>
</feature>
<reference key="1">
    <citation type="submission" date="2007-08" db="EMBL/GenBank/DDBJ databases">
        <authorList>
            <consortium name="The Citrobacter koseri Genome Sequencing Project"/>
            <person name="McClelland M."/>
            <person name="Sanderson E.K."/>
            <person name="Porwollik S."/>
            <person name="Spieth J."/>
            <person name="Clifton W.S."/>
            <person name="Latreille P."/>
            <person name="Courtney L."/>
            <person name="Wang C."/>
            <person name="Pepin K."/>
            <person name="Bhonagiri V."/>
            <person name="Nash W."/>
            <person name="Johnson M."/>
            <person name="Thiruvilangam P."/>
            <person name="Wilson R."/>
        </authorList>
    </citation>
    <scope>NUCLEOTIDE SEQUENCE [LARGE SCALE GENOMIC DNA]</scope>
    <source>
        <strain>ATCC BAA-895 / CDC 4225-83 / SGSC4696</strain>
    </source>
</reference>
<evidence type="ECO:0000255" key="1">
    <source>
        <dbReference type="HAMAP-Rule" id="MF_00518"/>
    </source>
</evidence>
<name>DTD_CITK8</name>
<sequence length="145" mass="15978">MIALIQRVTRASVTVEGEVTGEIGQGLLVLLGVERDDDEQKANRLCERVLGYRIFSDAEGKMNLNVQQAGGSVLVVSQFTLAADTERGMRPGFSRGAAPDRAEALYEYFVERCCQQEMNTQTGRFAADMQVSLVNDGPVTFWLQV</sequence>
<organism>
    <name type="scientific">Citrobacter koseri (strain ATCC BAA-895 / CDC 4225-83 / SGSC4696)</name>
    <dbReference type="NCBI Taxonomy" id="290338"/>
    <lineage>
        <taxon>Bacteria</taxon>
        <taxon>Pseudomonadati</taxon>
        <taxon>Pseudomonadota</taxon>
        <taxon>Gammaproteobacteria</taxon>
        <taxon>Enterobacterales</taxon>
        <taxon>Enterobacteriaceae</taxon>
        <taxon>Citrobacter</taxon>
    </lineage>
</organism>
<proteinExistence type="inferred from homology"/>
<comment type="function">
    <text evidence="1">An aminoacyl-tRNA editing enzyme that deacylates mischarged D-aminoacyl-tRNAs. Also deacylates mischarged glycyl-tRNA(Ala), protecting cells against glycine mischarging by AlaRS. Acts via tRNA-based rather than protein-based catalysis; rejects L-amino acids rather than detecting D-amino acids in the active site. By recycling D-aminoacyl-tRNA to D-amino acids and free tRNA molecules, this enzyme counteracts the toxicity associated with the formation of D-aminoacyl-tRNA entities in vivo and helps enforce protein L-homochirality.</text>
</comment>
<comment type="catalytic activity">
    <reaction evidence="1">
        <text>glycyl-tRNA(Ala) + H2O = tRNA(Ala) + glycine + H(+)</text>
        <dbReference type="Rhea" id="RHEA:53744"/>
        <dbReference type="Rhea" id="RHEA-COMP:9657"/>
        <dbReference type="Rhea" id="RHEA-COMP:13640"/>
        <dbReference type="ChEBI" id="CHEBI:15377"/>
        <dbReference type="ChEBI" id="CHEBI:15378"/>
        <dbReference type="ChEBI" id="CHEBI:57305"/>
        <dbReference type="ChEBI" id="CHEBI:78442"/>
        <dbReference type="ChEBI" id="CHEBI:78522"/>
        <dbReference type="EC" id="3.1.1.96"/>
    </reaction>
</comment>
<comment type="catalytic activity">
    <reaction evidence="1">
        <text>a D-aminoacyl-tRNA + H2O = a tRNA + a D-alpha-amino acid + H(+)</text>
        <dbReference type="Rhea" id="RHEA:13953"/>
        <dbReference type="Rhea" id="RHEA-COMP:10123"/>
        <dbReference type="Rhea" id="RHEA-COMP:10124"/>
        <dbReference type="ChEBI" id="CHEBI:15377"/>
        <dbReference type="ChEBI" id="CHEBI:15378"/>
        <dbReference type="ChEBI" id="CHEBI:59871"/>
        <dbReference type="ChEBI" id="CHEBI:78442"/>
        <dbReference type="ChEBI" id="CHEBI:79333"/>
        <dbReference type="EC" id="3.1.1.96"/>
    </reaction>
</comment>
<comment type="subunit">
    <text evidence="1">Homodimer.</text>
</comment>
<comment type="subcellular location">
    <subcellularLocation>
        <location evidence="1">Cytoplasm</location>
    </subcellularLocation>
</comment>
<comment type="domain">
    <text evidence="1">A Gly-cisPro motif from one monomer fits into the active site of the other monomer to allow specific chiral rejection of L-amino acids.</text>
</comment>
<comment type="similarity">
    <text evidence="1">Belongs to the DTD family.</text>
</comment>
<dbReference type="EC" id="3.1.1.96" evidence="1"/>
<dbReference type="EMBL" id="CP000822">
    <property type="protein sequence ID" value="ABV14216.1"/>
    <property type="molecule type" value="Genomic_DNA"/>
</dbReference>
<dbReference type="RefSeq" id="WP_012133923.1">
    <property type="nucleotide sequence ID" value="NC_009792.1"/>
</dbReference>
<dbReference type="SMR" id="A8AL53"/>
<dbReference type="STRING" id="290338.CKO_03125"/>
<dbReference type="GeneID" id="45136918"/>
<dbReference type="KEGG" id="cko:CKO_03125"/>
<dbReference type="HOGENOM" id="CLU_076901_1_0_6"/>
<dbReference type="OrthoDB" id="9801395at2"/>
<dbReference type="Proteomes" id="UP000008148">
    <property type="component" value="Chromosome"/>
</dbReference>
<dbReference type="GO" id="GO:0005737">
    <property type="term" value="C:cytoplasm"/>
    <property type="evidence" value="ECO:0007669"/>
    <property type="project" value="UniProtKB-SubCell"/>
</dbReference>
<dbReference type="GO" id="GO:0051500">
    <property type="term" value="F:D-tyrosyl-tRNA(Tyr) deacylase activity"/>
    <property type="evidence" value="ECO:0007669"/>
    <property type="project" value="TreeGrafter"/>
</dbReference>
<dbReference type="GO" id="GO:0106026">
    <property type="term" value="F:Gly-tRNA(Ala) deacylase activity"/>
    <property type="evidence" value="ECO:0007669"/>
    <property type="project" value="UniProtKB-UniRule"/>
</dbReference>
<dbReference type="GO" id="GO:0043908">
    <property type="term" value="F:Ser(Gly)-tRNA(Ala) hydrolase activity"/>
    <property type="evidence" value="ECO:0007669"/>
    <property type="project" value="UniProtKB-UniRule"/>
</dbReference>
<dbReference type="GO" id="GO:0000049">
    <property type="term" value="F:tRNA binding"/>
    <property type="evidence" value="ECO:0007669"/>
    <property type="project" value="UniProtKB-UniRule"/>
</dbReference>
<dbReference type="GO" id="GO:0019478">
    <property type="term" value="P:D-amino acid catabolic process"/>
    <property type="evidence" value="ECO:0007669"/>
    <property type="project" value="UniProtKB-UniRule"/>
</dbReference>
<dbReference type="CDD" id="cd00563">
    <property type="entry name" value="Dtyr_deacylase"/>
    <property type="match status" value="1"/>
</dbReference>
<dbReference type="FunFam" id="3.50.80.10:FF:000001">
    <property type="entry name" value="D-aminoacyl-tRNA deacylase"/>
    <property type="match status" value="1"/>
</dbReference>
<dbReference type="Gene3D" id="3.50.80.10">
    <property type="entry name" value="D-tyrosyl-tRNA(Tyr) deacylase"/>
    <property type="match status" value="1"/>
</dbReference>
<dbReference type="HAMAP" id="MF_00518">
    <property type="entry name" value="Deacylase_Dtd"/>
    <property type="match status" value="1"/>
</dbReference>
<dbReference type="InterPro" id="IPR003732">
    <property type="entry name" value="Daa-tRNA_deacyls_DTD"/>
</dbReference>
<dbReference type="InterPro" id="IPR023509">
    <property type="entry name" value="DTD-like_sf"/>
</dbReference>
<dbReference type="NCBIfam" id="TIGR00256">
    <property type="entry name" value="D-aminoacyl-tRNA deacylase"/>
    <property type="match status" value="1"/>
</dbReference>
<dbReference type="PANTHER" id="PTHR10472:SF5">
    <property type="entry name" value="D-AMINOACYL-TRNA DEACYLASE 1"/>
    <property type="match status" value="1"/>
</dbReference>
<dbReference type="PANTHER" id="PTHR10472">
    <property type="entry name" value="D-TYROSYL-TRNA TYR DEACYLASE"/>
    <property type="match status" value="1"/>
</dbReference>
<dbReference type="Pfam" id="PF02580">
    <property type="entry name" value="Tyr_Deacylase"/>
    <property type="match status" value="1"/>
</dbReference>
<dbReference type="SUPFAM" id="SSF69500">
    <property type="entry name" value="DTD-like"/>
    <property type="match status" value="1"/>
</dbReference>
<accession>A8AL53</accession>